<name>LSPA_ECOL5</name>
<comment type="function">
    <text evidence="1">This protein specifically catalyzes the removal of signal peptides from prolipoproteins.</text>
</comment>
<comment type="catalytic activity">
    <reaction evidence="1">
        <text>Release of signal peptides from bacterial membrane prolipoproteins. Hydrolyzes -Xaa-Yaa-Zaa-|-(S,diacylglyceryl)Cys-, in which Xaa is hydrophobic (preferably Leu), and Yaa (Ala or Ser) and Zaa (Gly or Ala) have small, neutral side chains.</text>
        <dbReference type="EC" id="3.4.23.36"/>
    </reaction>
</comment>
<comment type="pathway">
    <text evidence="1">Protein modification; lipoprotein biosynthesis (signal peptide cleavage).</text>
</comment>
<comment type="subcellular location">
    <subcellularLocation>
        <location evidence="1">Cell inner membrane</location>
        <topology evidence="1">Multi-pass membrane protein</topology>
    </subcellularLocation>
</comment>
<comment type="similarity">
    <text evidence="1">Belongs to the peptidase A8 family.</text>
</comment>
<organism>
    <name type="scientific">Escherichia coli O6:K15:H31 (strain 536 / UPEC)</name>
    <dbReference type="NCBI Taxonomy" id="362663"/>
    <lineage>
        <taxon>Bacteria</taxon>
        <taxon>Pseudomonadati</taxon>
        <taxon>Pseudomonadota</taxon>
        <taxon>Gammaproteobacteria</taxon>
        <taxon>Enterobacterales</taxon>
        <taxon>Enterobacteriaceae</taxon>
        <taxon>Escherichia</taxon>
    </lineage>
</organism>
<feature type="chain" id="PRO_0000289378" description="Lipoprotein signal peptidase">
    <location>
        <begin position="1"/>
        <end position="164"/>
    </location>
</feature>
<feature type="transmembrane region" description="Helical" evidence="1">
    <location>
        <begin position="12"/>
        <end position="32"/>
    </location>
</feature>
<feature type="transmembrane region" description="Helical" evidence="1">
    <location>
        <begin position="70"/>
        <end position="90"/>
    </location>
</feature>
<feature type="transmembrane region" description="Helical" evidence="1">
    <location>
        <begin position="102"/>
        <end position="122"/>
    </location>
</feature>
<feature type="transmembrane region" description="Helical" evidence="1">
    <location>
        <begin position="137"/>
        <end position="157"/>
    </location>
</feature>
<feature type="active site" evidence="1">
    <location>
        <position position="123"/>
    </location>
</feature>
<feature type="active site" evidence="1">
    <location>
        <position position="141"/>
    </location>
</feature>
<protein>
    <recommendedName>
        <fullName evidence="1">Lipoprotein signal peptidase</fullName>
        <ecNumber evidence="1">3.4.23.36</ecNumber>
    </recommendedName>
    <alternativeName>
        <fullName evidence="1">Prolipoprotein signal peptidase</fullName>
    </alternativeName>
    <alternativeName>
        <fullName evidence="1">Signal peptidase II</fullName>
        <shortName evidence="1">SPase II</shortName>
    </alternativeName>
</protein>
<accession>Q0TLW4</accession>
<dbReference type="EC" id="3.4.23.36" evidence="1"/>
<dbReference type="EMBL" id="CP000247">
    <property type="protein sequence ID" value="ABG68067.1"/>
    <property type="molecule type" value="Genomic_DNA"/>
</dbReference>
<dbReference type="RefSeq" id="WP_000083381.1">
    <property type="nucleotide sequence ID" value="NC_008253.1"/>
</dbReference>
<dbReference type="SMR" id="Q0TLW4"/>
<dbReference type="MEROPS" id="A08.001"/>
<dbReference type="GeneID" id="75058891"/>
<dbReference type="KEGG" id="ecp:ECP_0025"/>
<dbReference type="HOGENOM" id="CLU_083252_4_0_6"/>
<dbReference type="UniPathway" id="UPA00665"/>
<dbReference type="Proteomes" id="UP000009182">
    <property type="component" value="Chromosome"/>
</dbReference>
<dbReference type="GO" id="GO:0005886">
    <property type="term" value="C:plasma membrane"/>
    <property type="evidence" value="ECO:0007669"/>
    <property type="project" value="UniProtKB-SubCell"/>
</dbReference>
<dbReference type="GO" id="GO:0004190">
    <property type="term" value="F:aspartic-type endopeptidase activity"/>
    <property type="evidence" value="ECO:0007669"/>
    <property type="project" value="UniProtKB-UniRule"/>
</dbReference>
<dbReference type="GO" id="GO:0006508">
    <property type="term" value="P:proteolysis"/>
    <property type="evidence" value="ECO:0007669"/>
    <property type="project" value="UniProtKB-KW"/>
</dbReference>
<dbReference type="HAMAP" id="MF_00161">
    <property type="entry name" value="LspA"/>
    <property type="match status" value="1"/>
</dbReference>
<dbReference type="InterPro" id="IPR001872">
    <property type="entry name" value="Peptidase_A8"/>
</dbReference>
<dbReference type="NCBIfam" id="TIGR00077">
    <property type="entry name" value="lspA"/>
    <property type="match status" value="1"/>
</dbReference>
<dbReference type="PANTHER" id="PTHR33695">
    <property type="entry name" value="LIPOPROTEIN SIGNAL PEPTIDASE"/>
    <property type="match status" value="1"/>
</dbReference>
<dbReference type="PANTHER" id="PTHR33695:SF1">
    <property type="entry name" value="LIPOPROTEIN SIGNAL PEPTIDASE"/>
    <property type="match status" value="1"/>
</dbReference>
<dbReference type="Pfam" id="PF01252">
    <property type="entry name" value="Peptidase_A8"/>
    <property type="match status" value="1"/>
</dbReference>
<dbReference type="PRINTS" id="PR00781">
    <property type="entry name" value="LIPOSIGPTASE"/>
</dbReference>
<dbReference type="PROSITE" id="PS00855">
    <property type="entry name" value="SPASE_II"/>
    <property type="match status" value="1"/>
</dbReference>
<gene>
    <name evidence="1" type="primary">lspA</name>
    <name type="ordered locus">ECP_0025</name>
</gene>
<reference key="1">
    <citation type="journal article" date="2006" name="Mol. Microbiol.">
        <title>Role of pathogenicity island-associated integrases in the genome plasticity of uropathogenic Escherichia coli strain 536.</title>
        <authorList>
            <person name="Hochhut B."/>
            <person name="Wilde C."/>
            <person name="Balling G."/>
            <person name="Middendorf B."/>
            <person name="Dobrindt U."/>
            <person name="Brzuszkiewicz E."/>
            <person name="Gottschalk G."/>
            <person name="Carniel E."/>
            <person name="Hacker J."/>
        </authorList>
    </citation>
    <scope>NUCLEOTIDE SEQUENCE [LARGE SCALE GENOMIC DNA]</scope>
    <source>
        <strain>536 / UPEC</strain>
    </source>
</reference>
<sequence length="164" mass="18156">MSQSICSTGLRWLWLVVVVLIIDLGSKYLILQNFALGDTVPLFPSLNLHYARNYGAAFSFLADSGGWQRWFFAGIAIGISVILVVMMYRSKATQKLNNIAYALIIGGALGNLFDRLWHGFVVDMIDFYVGDWHFATFNLADTAICVGAALIVLEGFLPSKAKKQ</sequence>
<keyword id="KW-0064">Aspartyl protease</keyword>
<keyword id="KW-0997">Cell inner membrane</keyword>
<keyword id="KW-1003">Cell membrane</keyword>
<keyword id="KW-0378">Hydrolase</keyword>
<keyword id="KW-0472">Membrane</keyword>
<keyword id="KW-0645">Protease</keyword>
<keyword id="KW-0812">Transmembrane</keyword>
<keyword id="KW-1133">Transmembrane helix</keyword>
<evidence type="ECO:0000255" key="1">
    <source>
        <dbReference type="HAMAP-Rule" id="MF_00161"/>
    </source>
</evidence>
<proteinExistence type="inferred from homology"/>